<reference key="1">
    <citation type="journal article" date="2008" name="BMC Evol. Biol.">
        <title>Adaptive evolution of SCML1 in primates, a gene involved in male reproduction.</title>
        <authorList>
            <person name="Wu H.-H."/>
            <person name="Su B."/>
        </authorList>
    </citation>
    <scope>NUCLEOTIDE SEQUENCE [GENOMIC DNA]</scope>
    <scope>TISSUE SPECIFICITY</scope>
    <scope>DEVELOPMENTAL STAGE</scope>
</reference>
<comment type="function">
    <text evidence="1">Putative Polycomb group (PcG) protein. PcG proteins act by forming multiprotein complexes, which are required to maintain the transcriptionally repressive state of homeotic genes throughout development. May be involved in spermatogenesis during sexual maturation (By similarity).</text>
</comment>
<comment type="subcellular location">
    <subcellularLocation>
        <location evidence="6">Nucleus</location>
    </subcellularLocation>
</comment>
<comment type="tissue specificity">
    <text evidence="5">Highly expressed in testis and pancreas. Preferentially expressed in the germ stem cells of testis.</text>
</comment>
<comment type="developmental stage">
    <text evidence="5">Expression is decreased in adult compared to sexually immature individuals.</text>
</comment>
<comment type="similarity">
    <text evidence="6">Belongs to the SCM family.</text>
</comment>
<keyword id="KW-0539">Nucleus</keyword>
<keyword id="KW-0597">Phosphoprotein</keyword>
<keyword id="KW-1185">Reference proteome</keyword>
<keyword id="KW-0678">Repressor</keyword>
<keyword id="KW-0804">Transcription</keyword>
<keyword id="KW-0805">Transcription regulation</keyword>
<feature type="chain" id="PRO_0000380550" description="Sex comb on midleg-like protein 1">
    <location>
        <begin position="1"/>
        <end position="329"/>
    </location>
</feature>
<feature type="domain" description="SAM" evidence="3">
    <location>
        <begin position="258"/>
        <end position="325"/>
    </location>
</feature>
<feature type="region of interest" description="Disordered" evidence="4">
    <location>
        <begin position="125"/>
        <end position="194"/>
    </location>
</feature>
<feature type="compositionally biased region" description="Basic and acidic residues" evidence="4">
    <location>
        <begin position="159"/>
        <end position="168"/>
    </location>
</feature>
<feature type="modified residue" description="Phosphoserine" evidence="2">
    <location>
        <position position="138"/>
    </location>
</feature>
<feature type="modified residue" description="Phosphoserine" evidence="2">
    <location>
        <position position="238"/>
    </location>
</feature>
<name>SCML1_MACMU</name>
<protein>
    <recommendedName>
        <fullName>Sex comb on midleg-like protein 1</fullName>
    </recommendedName>
</protein>
<accession>B0FZP2</accession>
<proteinExistence type="evidence at transcript level"/>
<organism>
    <name type="scientific">Macaca mulatta</name>
    <name type="common">Rhesus macaque</name>
    <dbReference type="NCBI Taxonomy" id="9544"/>
    <lineage>
        <taxon>Eukaryota</taxon>
        <taxon>Metazoa</taxon>
        <taxon>Chordata</taxon>
        <taxon>Craniata</taxon>
        <taxon>Vertebrata</taxon>
        <taxon>Euteleostomi</taxon>
        <taxon>Mammalia</taxon>
        <taxon>Eutheria</taxon>
        <taxon>Euarchontoglires</taxon>
        <taxon>Primates</taxon>
        <taxon>Haplorrhini</taxon>
        <taxon>Catarrhini</taxon>
        <taxon>Cercopithecidae</taxon>
        <taxon>Cercopithecinae</taxon>
        <taxon>Macaca</taxon>
    </lineage>
</organism>
<evidence type="ECO:0000250" key="1"/>
<evidence type="ECO:0000250" key="2">
    <source>
        <dbReference type="UniProtKB" id="Q9UN30"/>
    </source>
</evidence>
<evidence type="ECO:0000255" key="3">
    <source>
        <dbReference type="PROSITE-ProRule" id="PRU00184"/>
    </source>
</evidence>
<evidence type="ECO:0000256" key="4">
    <source>
        <dbReference type="SAM" id="MobiDB-lite"/>
    </source>
</evidence>
<evidence type="ECO:0000269" key="5">
    <source>
    </source>
</evidence>
<evidence type="ECO:0000305" key="6"/>
<dbReference type="EMBL" id="EU370786">
    <property type="protein sequence ID" value="ABY68581.1"/>
    <property type="molecule type" value="Genomic_DNA"/>
</dbReference>
<dbReference type="RefSeq" id="NP_001107584.1">
    <property type="nucleotide sequence ID" value="NM_001114112.1"/>
</dbReference>
<dbReference type="RefSeq" id="XP_014982459.1">
    <property type="nucleotide sequence ID" value="XM_015126973.2"/>
</dbReference>
<dbReference type="SMR" id="B0FZP2"/>
<dbReference type="FunCoup" id="B0FZP2">
    <property type="interactions" value="197"/>
</dbReference>
<dbReference type="STRING" id="9544.ENSMMUP00000075289"/>
<dbReference type="PaxDb" id="9544-ENSMMUP00000016941"/>
<dbReference type="GeneID" id="714239"/>
<dbReference type="KEGG" id="mcc:714239"/>
<dbReference type="CTD" id="6322"/>
<dbReference type="eggNOG" id="KOG3766">
    <property type="taxonomic scope" value="Eukaryota"/>
</dbReference>
<dbReference type="InParanoid" id="B0FZP2"/>
<dbReference type="OrthoDB" id="5912862at2759"/>
<dbReference type="Proteomes" id="UP000006718">
    <property type="component" value="Unassembled WGS sequence"/>
</dbReference>
<dbReference type="GO" id="GO:0005634">
    <property type="term" value="C:nucleus"/>
    <property type="evidence" value="ECO:0000318"/>
    <property type="project" value="GO_Central"/>
</dbReference>
<dbReference type="GO" id="GO:0003682">
    <property type="term" value="F:chromatin binding"/>
    <property type="evidence" value="ECO:0000318"/>
    <property type="project" value="GO_Central"/>
</dbReference>
<dbReference type="GO" id="GO:0042393">
    <property type="term" value="F:histone binding"/>
    <property type="evidence" value="ECO:0000318"/>
    <property type="project" value="GO_Central"/>
</dbReference>
<dbReference type="GO" id="GO:0045892">
    <property type="term" value="P:negative regulation of DNA-templated transcription"/>
    <property type="evidence" value="ECO:0000318"/>
    <property type="project" value="GO_Central"/>
</dbReference>
<dbReference type="CDD" id="cd09578">
    <property type="entry name" value="SAM_Scm"/>
    <property type="match status" value="1"/>
</dbReference>
<dbReference type="FunFam" id="1.10.150.50:FF:000018">
    <property type="entry name" value="Polycomb protein scmh1 isoform 4"/>
    <property type="match status" value="1"/>
</dbReference>
<dbReference type="Gene3D" id="1.10.150.50">
    <property type="entry name" value="Transcription Factor, Ets-1"/>
    <property type="match status" value="1"/>
</dbReference>
<dbReference type="InterPro" id="IPR001660">
    <property type="entry name" value="SAM"/>
</dbReference>
<dbReference type="InterPro" id="IPR013761">
    <property type="entry name" value="SAM/pointed_sf"/>
</dbReference>
<dbReference type="InterPro" id="IPR047531">
    <property type="entry name" value="SAM_Scm-like"/>
</dbReference>
<dbReference type="PANTHER" id="PTHR47305">
    <property type="entry name" value="BEN DOMAIN-CONTAINING PROTEIN 2"/>
    <property type="match status" value="1"/>
</dbReference>
<dbReference type="PANTHER" id="PTHR47305:SF2">
    <property type="entry name" value="SAM DOMAIN-CONTAINING PROTEIN"/>
    <property type="match status" value="1"/>
</dbReference>
<dbReference type="Pfam" id="PF00536">
    <property type="entry name" value="SAM_1"/>
    <property type="match status" value="1"/>
</dbReference>
<dbReference type="SMART" id="SM00454">
    <property type="entry name" value="SAM"/>
    <property type="match status" value="1"/>
</dbReference>
<dbReference type="SUPFAM" id="SSF47769">
    <property type="entry name" value="SAM/Pointed domain"/>
    <property type="match status" value="1"/>
</dbReference>
<dbReference type="PROSITE" id="PS50105">
    <property type="entry name" value="SAM_DOMAIN"/>
    <property type="match status" value="1"/>
</dbReference>
<sequence>MMSSSSSEIDVVKTRIPTYDEDDDTILYAYETKPDFVNKEPNTVSDASCNTEEQQKTVNDVLIHCQVIYDAMQNLDKKIDVIRRKVSKIQRFRARSLWTNRKRYGYKNYSYQLAKKLKRQKMKKNEVHESFSYPESYSPTLPVSRRENNSPSNLPRPSFRMEEYQRAEPEEDPILSRTPSPVHPSDFSEHNYQPYYASDGAMHGSSSGPCLGNPGANSIYNTYSTDHASAAQPSVTSSPFENDRYIEEGSITKHPSTWSVEAVVLFLKQTDPLALCPLVDLFRSHEIDGKALLLLTSDVLLKHLGVKLGTAVKLCYYIDRLKQGKCFEN</sequence>
<gene>
    <name type="primary">SCML1</name>
</gene>